<evidence type="ECO:0000255" key="1">
    <source>
        <dbReference type="HAMAP-Rule" id="MF_01374"/>
    </source>
</evidence>
<feature type="chain" id="PRO_0000309724" description="Hydroxyacylglutathione hydrolase 1">
    <location>
        <begin position="1"/>
        <end position="247"/>
    </location>
</feature>
<feature type="binding site" evidence="1">
    <location>
        <position position="54"/>
    </location>
    <ligand>
        <name>Zn(2+)</name>
        <dbReference type="ChEBI" id="CHEBI:29105"/>
        <label>1</label>
    </ligand>
</feature>
<feature type="binding site" evidence="1">
    <location>
        <position position="56"/>
    </location>
    <ligand>
        <name>Zn(2+)</name>
        <dbReference type="ChEBI" id="CHEBI:29105"/>
        <label>1</label>
    </ligand>
</feature>
<feature type="binding site" evidence="1">
    <location>
        <position position="58"/>
    </location>
    <ligand>
        <name>Zn(2+)</name>
        <dbReference type="ChEBI" id="CHEBI:29105"/>
        <label>2</label>
    </ligand>
</feature>
<feature type="binding site" evidence="1">
    <location>
        <position position="59"/>
    </location>
    <ligand>
        <name>Zn(2+)</name>
        <dbReference type="ChEBI" id="CHEBI:29105"/>
        <label>2</label>
    </ligand>
</feature>
<feature type="binding site" evidence="1">
    <location>
        <position position="111"/>
    </location>
    <ligand>
        <name>Zn(2+)</name>
        <dbReference type="ChEBI" id="CHEBI:29105"/>
        <label>1</label>
    </ligand>
</feature>
<feature type="binding site" evidence="1">
    <location>
        <position position="128"/>
    </location>
    <ligand>
        <name>Zn(2+)</name>
        <dbReference type="ChEBI" id="CHEBI:29105"/>
        <label>1</label>
    </ligand>
</feature>
<feature type="binding site" evidence="1">
    <location>
        <position position="128"/>
    </location>
    <ligand>
        <name>Zn(2+)</name>
        <dbReference type="ChEBI" id="CHEBI:29105"/>
        <label>2</label>
    </ligand>
</feature>
<feature type="binding site" evidence="1">
    <location>
        <position position="165"/>
    </location>
    <ligand>
        <name>Zn(2+)</name>
        <dbReference type="ChEBI" id="CHEBI:29105"/>
        <label>2</label>
    </ligand>
</feature>
<proteinExistence type="inferred from homology"/>
<dbReference type="EC" id="3.1.2.6" evidence="1"/>
<dbReference type="EMBL" id="BA000037">
    <property type="protein sequence ID" value="BAC92917.1"/>
    <property type="molecule type" value="Genomic_DNA"/>
</dbReference>
<dbReference type="SMR" id="Q7MQ55"/>
<dbReference type="STRING" id="672.VV93_v1c01410"/>
<dbReference type="KEGG" id="vvy:VV0153"/>
<dbReference type="eggNOG" id="COG0491">
    <property type="taxonomic scope" value="Bacteria"/>
</dbReference>
<dbReference type="HOGENOM" id="CLU_030571_4_1_6"/>
<dbReference type="UniPathway" id="UPA00619">
    <property type="reaction ID" value="UER00676"/>
</dbReference>
<dbReference type="Proteomes" id="UP000002675">
    <property type="component" value="Chromosome I"/>
</dbReference>
<dbReference type="GO" id="GO:0004416">
    <property type="term" value="F:hydroxyacylglutathione hydrolase activity"/>
    <property type="evidence" value="ECO:0007669"/>
    <property type="project" value="UniProtKB-UniRule"/>
</dbReference>
<dbReference type="GO" id="GO:0046872">
    <property type="term" value="F:metal ion binding"/>
    <property type="evidence" value="ECO:0007669"/>
    <property type="project" value="UniProtKB-KW"/>
</dbReference>
<dbReference type="GO" id="GO:0019243">
    <property type="term" value="P:methylglyoxal catabolic process to D-lactate via S-lactoyl-glutathione"/>
    <property type="evidence" value="ECO:0007669"/>
    <property type="project" value="InterPro"/>
</dbReference>
<dbReference type="CDD" id="cd07723">
    <property type="entry name" value="hydroxyacylglutathione_hydrolase_MBL-fold"/>
    <property type="match status" value="1"/>
</dbReference>
<dbReference type="Gene3D" id="3.60.15.10">
    <property type="entry name" value="Ribonuclease Z/Hydroxyacylglutathione hydrolase-like"/>
    <property type="match status" value="1"/>
</dbReference>
<dbReference type="HAMAP" id="MF_01374">
    <property type="entry name" value="Glyoxalase_2"/>
    <property type="match status" value="1"/>
</dbReference>
<dbReference type="InterPro" id="IPR035680">
    <property type="entry name" value="Clx_II_MBL"/>
</dbReference>
<dbReference type="InterPro" id="IPR050110">
    <property type="entry name" value="Glyoxalase_II_hydrolase"/>
</dbReference>
<dbReference type="InterPro" id="IPR032282">
    <property type="entry name" value="HAGH_C"/>
</dbReference>
<dbReference type="InterPro" id="IPR017782">
    <property type="entry name" value="Hydroxyacylglutathione_Hdrlase"/>
</dbReference>
<dbReference type="InterPro" id="IPR001279">
    <property type="entry name" value="Metallo-B-lactamas"/>
</dbReference>
<dbReference type="InterPro" id="IPR036866">
    <property type="entry name" value="RibonucZ/Hydroxyglut_hydro"/>
</dbReference>
<dbReference type="NCBIfam" id="TIGR03413">
    <property type="entry name" value="GSH_gloB"/>
    <property type="match status" value="1"/>
</dbReference>
<dbReference type="PANTHER" id="PTHR43705">
    <property type="entry name" value="HYDROXYACYLGLUTATHIONE HYDROLASE"/>
    <property type="match status" value="1"/>
</dbReference>
<dbReference type="PANTHER" id="PTHR43705:SF1">
    <property type="entry name" value="HYDROXYACYLGLUTATHIONE HYDROLASE GLOB"/>
    <property type="match status" value="1"/>
</dbReference>
<dbReference type="Pfam" id="PF16123">
    <property type="entry name" value="HAGH_C"/>
    <property type="match status" value="1"/>
</dbReference>
<dbReference type="Pfam" id="PF00753">
    <property type="entry name" value="Lactamase_B"/>
    <property type="match status" value="1"/>
</dbReference>
<dbReference type="SMART" id="SM00849">
    <property type="entry name" value="Lactamase_B"/>
    <property type="match status" value="1"/>
</dbReference>
<dbReference type="SUPFAM" id="SSF56281">
    <property type="entry name" value="Metallo-hydrolase/oxidoreductase"/>
    <property type="match status" value="1"/>
</dbReference>
<protein>
    <recommendedName>
        <fullName evidence="1">Hydroxyacylglutathione hydrolase 1</fullName>
        <ecNumber evidence="1">3.1.2.6</ecNumber>
    </recommendedName>
    <alternativeName>
        <fullName evidence="1">Glyoxalase II 1</fullName>
        <shortName evidence="1">Glx II 1</shortName>
    </alternativeName>
</protein>
<organism>
    <name type="scientific">Vibrio vulnificus (strain YJ016)</name>
    <dbReference type="NCBI Taxonomy" id="196600"/>
    <lineage>
        <taxon>Bacteria</taxon>
        <taxon>Pseudomonadati</taxon>
        <taxon>Pseudomonadota</taxon>
        <taxon>Gammaproteobacteria</taxon>
        <taxon>Vibrionales</taxon>
        <taxon>Vibrionaceae</taxon>
        <taxon>Vibrio</taxon>
    </lineage>
</organism>
<sequence length="247" mass="28352">MSLSITHEKSLIDNYIWILFDKSKAIVIDPGESEKIINFLDKNNLTLEFIFLTHGHCDHTKGVFSLKEKFPNASLFVPIGLELGLGESIIKEGDELNLLNSTFNVLELPGHTDNHIGIMYKDNLFCGDVLFSAGCGRVGSNYKDMYLSLKKIKSMDDKTKIYFSHEYTLDNLKFAHYIDPKNKNIINYIEVFKEKPDTVSAPTTLLLEKEINPFLRLSENIDIKNKINNEFDAFVYLRKLKDKFNSI</sequence>
<accession>Q7MQ55</accession>
<comment type="function">
    <text evidence="1">Thiolesterase that catalyzes the hydrolysis of S-D-lactoyl-glutathione to form glutathione and D-lactic acid.</text>
</comment>
<comment type="catalytic activity">
    <reaction evidence="1">
        <text>an S-(2-hydroxyacyl)glutathione + H2O = a 2-hydroxy carboxylate + glutathione + H(+)</text>
        <dbReference type="Rhea" id="RHEA:21864"/>
        <dbReference type="ChEBI" id="CHEBI:15377"/>
        <dbReference type="ChEBI" id="CHEBI:15378"/>
        <dbReference type="ChEBI" id="CHEBI:57925"/>
        <dbReference type="ChEBI" id="CHEBI:58896"/>
        <dbReference type="ChEBI" id="CHEBI:71261"/>
        <dbReference type="EC" id="3.1.2.6"/>
    </reaction>
</comment>
<comment type="cofactor">
    <cofactor evidence="1">
        <name>Zn(2+)</name>
        <dbReference type="ChEBI" id="CHEBI:29105"/>
    </cofactor>
    <text evidence="1">Binds 2 Zn(2+) ions per subunit.</text>
</comment>
<comment type="pathway">
    <text evidence="1">Secondary metabolite metabolism; methylglyoxal degradation; (R)-lactate from methylglyoxal: step 2/2.</text>
</comment>
<comment type="subunit">
    <text evidence="1">Monomer.</text>
</comment>
<comment type="similarity">
    <text evidence="1">Belongs to the metallo-beta-lactamase superfamily. Glyoxalase II family.</text>
</comment>
<reference key="1">
    <citation type="journal article" date="2003" name="Genome Res.">
        <title>Comparative genome analysis of Vibrio vulnificus, a marine pathogen.</title>
        <authorList>
            <person name="Chen C.-Y."/>
            <person name="Wu K.-M."/>
            <person name="Chang Y.-C."/>
            <person name="Chang C.-H."/>
            <person name="Tsai H.-C."/>
            <person name="Liao T.-L."/>
            <person name="Liu Y.-M."/>
            <person name="Chen H.-J."/>
            <person name="Shen A.B.-T."/>
            <person name="Li J.-C."/>
            <person name="Su T.-L."/>
            <person name="Shao C.-P."/>
            <person name="Lee C.-T."/>
            <person name="Hor L.-I."/>
            <person name="Tsai S.-F."/>
        </authorList>
    </citation>
    <scope>NUCLEOTIDE SEQUENCE [LARGE SCALE GENOMIC DNA]</scope>
    <source>
        <strain>YJ016</strain>
    </source>
</reference>
<name>GLO21_VIBVY</name>
<gene>
    <name evidence="1" type="primary">gloB1</name>
    <name type="ordered locus">VV0153</name>
</gene>
<keyword id="KW-0378">Hydrolase</keyword>
<keyword id="KW-0479">Metal-binding</keyword>
<keyword id="KW-0862">Zinc</keyword>